<dbReference type="EMBL" id="CR861313">
    <property type="protein sequence ID" value="CAH93378.1"/>
    <property type="molecule type" value="mRNA"/>
</dbReference>
<dbReference type="RefSeq" id="NP_001181970.1">
    <property type="nucleotide sequence ID" value="NM_001195041.1"/>
</dbReference>
<dbReference type="SMR" id="Q5R4D8"/>
<dbReference type="FunCoup" id="Q5R4D8">
    <property type="interactions" value="1243"/>
</dbReference>
<dbReference type="Ensembl" id="ENSPPYT00000018015.2">
    <property type="protein sequence ID" value="ENSPPYP00000017311.1"/>
    <property type="gene ID" value="ENSPPYG00000015492.2"/>
</dbReference>
<dbReference type="Ensembl" id="ENSPPYT00000039235.1">
    <property type="protein sequence ID" value="ENSPPYP00000041317.1"/>
    <property type="gene ID" value="ENSPPYG00000015492.2"/>
</dbReference>
<dbReference type="GeneID" id="100174007"/>
<dbReference type="KEGG" id="pon:100174007"/>
<dbReference type="CTD" id="643155"/>
<dbReference type="eggNOG" id="ENOG502SDBQ">
    <property type="taxonomic scope" value="Eukaryota"/>
</dbReference>
<dbReference type="GeneTree" id="ENSGT00390000008903"/>
<dbReference type="HOGENOM" id="CLU_2687094_0_0_1"/>
<dbReference type="InParanoid" id="Q5R4D8"/>
<dbReference type="OMA" id="MIDFRAW"/>
<dbReference type="OrthoDB" id="6282848at2759"/>
<dbReference type="TreeFam" id="TF328386"/>
<dbReference type="Proteomes" id="UP000001595">
    <property type="component" value="Chromosome 5"/>
</dbReference>
<dbReference type="GO" id="GO:0016020">
    <property type="term" value="C:membrane"/>
    <property type="evidence" value="ECO:0007669"/>
    <property type="project" value="UniProtKB-SubCell"/>
</dbReference>
<dbReference type="InterPro" id="IPR027877">
    <property type="entry name" value="Smim15"/>
</dbReference>
<dbReference type="PANTHER" id="PTHR28644">
    <property type="entry name" value="SMALL INTEGRAL MEMBRANE PROTEIN 15"/>
    <property type="match status" value="1"/>
</dbReference>
<dbReference type="PANTHER" id="PTHR28644:SF1">
    <property type="entry name" value="SMALL INTEGRAL MEMBRANE PROTEIN 15"/>
    <property type="match status" value="1"/>
</dbReference>
<dbReference type="Pfam" id="PF15086">
    <property type="entry name" value="UPF0542"/>
    <property type="match status" value="1"/>
</dbReference>
<keyword id="KW-0175">Coiled coil</keyword>
<keyword id="KW-0472">Membrane</keyword>
<keyword id="KW-1185">Reference proteome</keyword>
<keyword id="KW-0812">Transmembrane</keyword>
<keyword id="KW-1133">Transmembrane helix</keyword>
<name>SIM15_PONAB</name>
<proteinExistence type="inferred from homology"/>
<reference key="1">
    <citation type="submission" date="2004-11" db="EMBL/GenBank/DDBJ databases">
        <authorList>
            <consortium name="The German cDNA consortium"/>
        </authorList>
    </citation>
    <scope>NUCLEOTIDE SEQUENCE [LARGE SCALE MRNA]</scope>
    <source>
        <tissue>Brain cortex</tissue>
    </source>
</reference>
<protein>
    <recommendedName>
        <fullName>Small integral membrane protein 15</fullName>
    </recommendedName>
</protein>
<comment type="subcellular location">
    <subcellularLocation>
        <location evidence="3">Membrane</location>
        <topology evidence="3">Single-pass membrane protein</topology>
    </subcellularLocation>
</comment>
<comment type="similarity">
    <text evidence="3">Belongs to the SMIM15 family.</text>
</comment>
<feature type="chain" id="PRO_0000326077" description="Small integral membrane protein 15">
    <location>
        <begin position="1"/>
        <end position="74"/>
    </location>
</feature>
<feature type="transmembrane region" description="Helical" evidence="1">
    <location>
        <begin position="20"/>
        <end position="40"/>
    </location>
</feature>
<feature type="region of interest" description="Disordered" evidence="2">
    <location>
        <begin position="55"/>
        <end position="74"/>
    </location>
</feature>
<feature type="coiled-coil region" evidence="1">
    <location>
        <begin position="42"/>
        <end position="74"/>
    </location>
</feature>
<feature type="compositionally biased region" description="Basic and acidic residues" evidence="2">
    <location>
        <begin position="55"/>
        <end position="66"/>
    </location>
</feature>
<accession>Q5R4D8</accession>
<evidence type="ECO:0000255" key="1"/>
<evidence type="ECO:0000256" key="2">
    <source>
        <dbReference type="SAM" id="MobiDB-lite"/>
    </source>
</evidence>
<evidence type="ECO:0000305" key="3"/>
<gene>
    <name type="primary">SMIM15</name>
</gene>
<sequence>MFDIKAWAEYVVEWAAKDPYGFLTTVILALTPLFLASAVLSWKLAKMIEAREKEQKKKQKRQENIAKAKRLKKD</sequence>
<organism>
    <name type="scientific">Pongo abelii</name>
    <name type="common">Sumatran orangutan</name>
    <name type="synonym">Pongo pygmaeus abelii</name>
    <dbReference type="NCBI Taxonomy" id="9601"/>
    <lineage>
        <taxon>Eukaryota</taxon>
        <taxon>Metazoa</taxon>
        <taxon>Chordata</taxon>
        <taxon>Craniata</taxon>
        <taxon>Vertebrata</taxon>
        <taxon>Euteleostomi</taxon>
        <taxon>Mammalia</taxon>
        <taxon>Eutheria</taxon>
        <taxon>Euarchontoglires</taxon>
        <taxon>Primates</taxon>
        <taxon>Haplorrhini</taxon>
        <taxon>Catarrhini</taxon>
        <taxon>Hominidae</taxon>
        <taxon>Pongo</taxon>
    </lineage>
</organism>